<evidence type="ECO:0000255" key="1"/>
<evidence type="ECO:0000256" key="2">
    <source>
        <dbReference type="SAM" id="MobiDB-lite"/>
    </source>
</evidence>
<evidence type="ECO:0000269" key="3">
    <source>
    </source>
</evidence>
<proteinExistence type="evidence at protein level"/>
<keyword id="KW-0175">Coiled coil</keyword>
<keyword id="KW-1185">Reference proteome</keyword>
<keyword id="KW-0833">Ubl conjugation pathway</keyword>
<protein>
    <recommendedName>
        <fullName>Protein SKIP34</fullName>
    </recommendedName>
    <alternativeName>
        <fullName>SKP1-interacting partner 34</fullName>
    </alternativeName>
</protein>
<organism>
    <name type="scientific">Arabidopsis thaliana</name>
    <name type="common">Mouse-ear cress</name>
    <dbReference type="NCBI Taxonomy" id="3702"/>
    <lineage>
        <taxon>Eukaryota</taxon>
        <taxon>Viridiplantae</taxon>
        <taxon>Streptophyta</taxon>
        <taxon>Embryophyta</taxon>
        <taxon>Tracheophyta</taxon>
        <taxon>Spermatophyta</taxon>
        <taxon>Magnoliopsida</taxon>
        <taxon>eudicotyledons</taxon>
        <taxon>Gunneridae</taxon>
        <taxon>Pentapetalae</taxon>
        <taxon>rosids</taxon>
        <taxon>malvids</taxon>
        <taxon>Brassicales</taxon>
        <taxon>Brassicaceae</taxon>
        <taxon>Camelineae</taxon>
        <taxon>Arabidopsis</taxon>
    </lineage>
</organism>
<dbReference type="EMBL" id="AB026638">
    <property type="status" value="NOT_ANNOTATED_CDS"/>
    <property type="molecule type" value="Genomic_DNA"/>
</dbReference>
<dbReference type="EMBL" id="CP002688">
    <property type="protein sequence ID" value="AED98063.1"/>
    <property type="molecule type" value="Genomic_DNA"/>
</dbReference>
<dbReference type="EMBL" id="AK118625">
    <property type="protein sequence ID" value="BAC43223.1"/>
    <property type="molecule type" value="mRNA"/>
</dbReference>
<dbReference type="EMBL" id="BT004684">
    <property type="protein sequence ID" value="AAO42930.1"/>
    <property type="molecule type" value="mRNA"/>
</dbReference>
<dbReference type="RefSeq" id="NP_850928.1">
    <property type="nucleotide sequence ID" value="NM_180597.3"/>
</dbReference>
<dbReference type="SMR" id="Q8GWU7"/>
<dbReference type="BioGRID" id="21917">
    <property type="interactions" value="6"/>
</dbReference>
<dbReference type="FunCoup" id="Q8GWU7">
    <property type="interactions" value="68"/>
</dbReference>
<dbReference type="IntAct" id="Q8GWU7">
    <property type="interactions" value="8"/>
</dbReference>
<dbReference type="STRING" id="3702.Q8GWU7"/>
<dbReference type="PaxDb" id="3702-AT5G65495.1"/>
<dbReference type="EnsemblPlants" id="AT5G65495.1">
    <property type="protein sequence ID" value="AT5G65495.1"/>
    <property type="gene ID" value="AT5G65495"/>
</dbReference>
<dbReference type="GeneID" id="836675"/>
<dbReference type="Gramene" id="AT5G65495.1">
    <property type="protein sequence ID" value="AT5G65495.1"/>
    <property type="gene ID" value="AT5G65495"/>
</dbReference>
<dbReference type="KEGG" id="ath:AT5G65495"/>
<dbReference type="Araport" id="AT5G65495"/>
<dbReference type="TAIR" id="AT5G65495"/>
<dbReference type="eggNOG" id="ENOG502S8X3">
    <property type="taxonomic scope" value="Eukaryota"/>
</dbReference>
<dbReference type="HOGENOM" id="CLU_164338_0_0_1"/>
<dbReference type="InParanoid" id="Q8GWU7"/>
<dbReference type="OMA" id="MEIMETF"/>
<dbReference type="OrthoDB" id="1926663at2759"/>
<dbReference type="PRO" id="PR:Q8GWU7"/>
<dbReference type="Proteomes" id="UP000006548">
    <property type="component" value="Chromosome 5"/>
</dbReference>
<dbReference type="ExpressionAtlas" id="Q8GWU7">
    <property type="expression patterns" value="baseline and differential"/>
</dbReference>
<comment type="subunit">
    <text evidence="3">Interacts with SPK1B/ASK2.</text>
</comment>
<feature type="chain" id="PRO_0000375235" description="Protein SKIP34">
    <location>
        <begin position="1"/>
        <end position="94"/>
    </location>
</feature>
<feature type="region of interest" description="Disordered" evidence="2">
    <location>
        <begin position="1"/>
        <end position="27"/>
    </location>
</feature>
<feature type="coiled-coil region" evidence="1">
    <location>
        <begin position="23"/>
        <end position="61"/>
    </location>
</feature>
<reference key="1">
    <citation type="submission" date="1999-04" db="EMBL/GenBank/DDBJ databases">
        <title>Structural analysis of Arabidopsis thaliana chromosome 5. XI.</title>
        <authorList>
            <person name="Kaneko T."/>
            <person name="Katoh T."/>
            <person name="Asamizu E."/>
            <person name="Sato S."/>
            <person name="Nakamura Y."/>
            <person name="Kotani H."/>
            <person name="Tabata S."/>
        </authorList>
    </citation>
    <scope>NUCLEOTIDE SEQUENCE [LARGE SCALE GENOMIC DNA]</scope>
    <source>
        <strain>cv. Columbia</strain>
    </source>
</reference>
<reference key="2">
    <citation type="journal article" date="2017" name="Plant J.">
        <title>Araport11: a complete reannotation of the Arabidopsis thaliana reference genome.</title>
        <authorList>
            <person name="Cheng C.Y."/>
            <person name="Krishnakumar V."/>
            <person name="Chan A.P."/>
            <person name="Thibaud-Nissen F."/>
            <person name="Schobel S."/>
            <person name="Town C.D."/>
        </authorList>
    </citation>
    <scope>GENOME REANNOTATION</scope>
    <source>
        <strain>cv. Columbia</strain>
    </source>
</reference>
<reference key="3">
    <citation type="journal article" date="2002" name="Science">
        <title>Functional annotation of a full-length Arabidopsis cDNA collection.</title>
        <authorList>
            <person name="Seki M."/>
            <person name="Narusaka M."/>
            <person name="Kamiya A."/>
            <person name="Ishida J."/>
            <person name="Satou M."/>
            <person name="Sakurai T."/>
            <person name="Nakajima M."/>
            <person name="Enju A."/>
            <person name="Akiyama K."/>
            <person name="Oono Y."/>
            <person name="Muramatsu M."/>
            <person name="Hayashizaki Y."/>
            <person name="Kawai J."/>
            <person name="Carninci P."/>
            <person name="Itoh M."/>
            <person name="Ishii Y."/>
            <person name="Arakawa T."/>
            <person name="Shibata K."/>
            <person name="Shinagawa A."/>
            <person name="Shinozaki K."/>
        </authorList>
    </citation>
    <scope>NUCLEOTIDE SEQUENCE [LARGE SCALE MRNA]</scope>
    <source>
        <strain>cv. Columbia</strain>
    </source>
</reference>
<reference key="4">
    <citation type="journal article" date="2003" name="Science">
        <title>Empirical analysis of transcriptional activity in the Arabidopsis genome.</title>
        <authorList>
            <person name="Yamada K."/>
            <person name="Lim J."/>
            <person name="Dale J.M."/>
            <person name="Chen H."/>
            <person name="Shinn P."/>
            <person name="Palm C.J."/>
            <person name="Southwick A.M."/>
            <person name="Wu H.C."/>
            <person name="Kim C.J."/>
            <person name="Nguyen M."/>
            <person name="Pham P.K."/>
            <person name="Cheuk R.F."/>
            <person name="Karlin-Newmann G."/>
            <person name="Liu S.X."/>
            <person name="Lam B."/>
            <person name="Sakano H."/>
            <person name="Wu T."/>
            <person name="Yu G."/>
            <person name="Miranda M."/>
            <person name="Quach H.L."/>
            <person name="Tripp M."/>
            <person name="Chang C.H."/>
            <person name="Lee J.M."/>
            <person name="Toriumi M.J."/>
            <person name="Chan M.M."/>
            <person name="Tang C.C."/>
            <person name="Onodera C.S."/>
            <person name="Deng J.M."/>
            <person name="Akiyama K."/>
            <person name="Ansari Y."/>
            <person name="Arakawa T."/>
            <person name="Banh J."/>
            <person name="Banno F."/>
            <person name="Bowser L."/>
            <person name="Brooks S.Y."/>
            <person name="Carninci P."/>
            <person name="Chao Q."/>
            <person name="Choy N."/>
            <person name="Enju A."/>
            <person name="Goldsmith A.D."/>
            <person name="Gurjal M."/>
            <person name="Hansen N.F."/>
            <person name="Hayashizaki Y."/>
            <person name="Johnson-Hopson C."/>
            <person name="Hsuan V.W."/>
            <person name="Iida K."/>
            <person name="Karnes M."/>
            <person name="Khan S."/>
            <person name="Koesema E."/>
            <person name="Ishida J."/>
            <person name="Jiang P.X."/>
            <person name="Jones T."/>
            <person name="Kawai J."/>
            <person name="Kamiya A."/>
            <person name="Meyers C."/>
            <person name="Nakajima M."/>
            <person name="Narusaka M."/>
            <person name="Seki M."/>
            <person name="Sakurai T."/>
            <person name="Satou M."/>
            <person name="Tamse R."/>
            <person name="Vaysberg M."/>
            <person name="Wallender E.K."/>
            <person name="Wong C."/>
            <person name="Yamamura Y."/>
            <person name="Yuan S."/>
            <person name="Shinozaki K."/>
            <person name="Davis R.W."/>
            <person name="Theologis A."/>
            <person name="Ecker J.R."/>
        </authorList>
    </citation>
    <scope>NUCLEOTIDE SEQUENCE [LARGE SCALE MRNA]</scope>
    <source>
        <strain>cv. Columbia</strain>
    </source>
</reference>
<reference key="5">
    <citation type="journal article" date="2003" name="Plant J.">
        <title>Protein interaction analysis of SCF ubiquitin E3 ligase subunits from Arabidopsis.</title>
        <authorList>
            <person name="Risseeuw E.P."/>
            <person name="Daskalchuk T.E."/>
            <person name="Banks T.W."/>
            <person name="Liu E."/>
            <person name="Cotelesage J."/>
            <person name="Hellmann H."/>
            <person name="Estelle M."/>
            <person name="Somers D.E."/>
            <person name="Crosby W.L."/>
        </authorList>
    </citation>
    <scope>INTERACTION WITH SPK1B/ASK2</scope>
</reference>
<name>SKI34_ARATH</name>
<gene>
    <name type="primary">SKIP34</name>
    <name type="ordered locus">At5g65495</name>
    <name type="ORF">K19O4</name>
</gene>
<sequence>MCYGHNQSLSSRSSLRRRSHDGEDDSVVDDLRDRLAETEARLRRARAREAELSRRLEHMKRFVSVMEIIETFLERRFQEQKDRIARLFSPVSTK</sequence>
<accession>Q8GWU7</accession>